<gene>
    <name evidence="2" type="primary">FN1</name>
</gene>
<evidence type="ECO:0000250" key="1"/>
<evidence type="ECO:0000250" key="2">
    <source>
        <dbReference type="UniProtKB" id="P02751"/>
    </source>
</evidence>
<evidence type="ECO:0000250" key="3">
    <source>
        <dbReference type="UniProtKB" id="P07589"/>
    </source>
</evidence>
<evidence type="ECO:0000250" key="4">
    <source>
        <dbReference type="UniProtKB" id="P11276"/>
    </source>
</evidence>
<evidence type="ECO:0000255" key="5"/>
<evidence type="ECO:0000255" key="6">
    <source>
        <dbReference type="PROSITE-ProRule" id="PRU00316"/>
    </source>
</evidence>
<evidence type="ECO:0000255" key="7">
    <source>
        <dbReference type="PROSITE-ProRule" id="PRU00478"/>
    </source>
</evidence>
<evidence type="ECO:0000255" key="8">
    <source>
        <dbReference type="PROSITE-ProRule" id="PRU00479"/>
    </source>
</evidence>
<evidence type="ECO:0000255" key="9">
    <source>
        <dbReference type="PROSITE-ProRule" id="PRU00498"/>
    </source>
</evidence>
<evidence type="ECO:0000256" key="10">
    <source>
        <dbReference type="SAM" id="MobiDB-lite"/>
    </source>
</evidence>
<evidence type="ECO:0000269" key="11">
    <source>
    </source>
</evidence>
<evidence type="ECO:0000305" key="12"/>
<organism>
    <name type="scientific">Canis lupus familiaris</name>
    <name type="common">Dog</name>
    <name type="synonym">Canis familiaris</name>
    <dbReference type="NCBI Taxonomy" id="9615"/>
    <lineage>
        <taxon>Eukaryota</taxon>
        <taxon>Metazoa</taxon>
        <taxon>Chordata</taxon>
        <taxon>Craniata</taxon>
        <taxon>Vertebrata</taxon>
        <taxon>Euteleostomi</taxon>
        <taxon>Mammalia</taxon>
        <taxon>Eutheria</taxon>
        <taxon>Laurasiatheria</taxon>
        <taxon>Carnivora</taxon>
        <taxon>Caniformia</taxon>
        <taxon>Canidae</taxon>
        <taxon>Canis</taxon>
    </lineage>
</organism>
<accession>Q28275</accession>
<accession>Q28276</accession>
<name>FINC_CANLF</name>
<proteinExistence type="evidence at transcript level"/>
<sequence length="2208" mass="243226">LGAALRSAGAARGRRQAQQIVQPPGPPGCYDNGKHYQINQQWERTYLGNALVCTCYGGSRGFNCESKPEPEETCFDKYTGNTYRVGDTYERPKDSMIWDCTCIGAGRGRISCTIANRCHEGGQSYKIGDTWRRPHETGGYMLECVCLGNGKGEWTCKPIAEKCFDHAAGTSYVVGETWEKPYQGWMMVDCTCLGEGSGRITCTSRNRCNDQDTRTSYRIGDTWSKKDNRGNLLQCICTGNGRGEWKCERHASLQTTSTGSGPFTDVRTAIYQPQPHPQPAPYGHCVTDSGVVYSVGMQWLKTQGNKQMLCTCLGNGVSCQETAVTQTYGGNSNGEPCVLPFTYNGRTFYSCTTEGRQDGHLWCSTTSNYEQDQKYSFCTDHTVLVQTRGGNSNGALCHFPFLYNNHNYTDCTSEGRRDNMKWCGTTPNYDADQKFGFCPHAHEEICTTNEGHDMGHMMRCTCVGNGRGEWTCVAYSQLRDQCIVDDITYNVNDTFHKRHEEGHMLNCTCFGQGRGRWKCDPIDQCQDSETRTFYQIGDSWEKYVHGVRYQCYCYGRGIGEWHCQPLQTYPGTTGPVQVIITETPSQPNSHPIQWNAPEPSHISKYILRWKPKNSPGRWKEATIPGHLNSYTIKGLTPGVVYEGQLISVQHYGHREVTRFDFTTTSTSPPVTSNTVTGETTPLSPVVATSESVTEITASSFVVSWVSASDTVSGFRVEYELSEEGDEPQYLDLPSTATSVNIPDLLPGRKYIVNVYQISEEGEQSLILSTSQTTAPDAPPDPAVDRVDDTSIVVRWSRPQAPITGYRIVYSPSVEGSSTELNLPETANSVTLSDLQPGVQYNITIYAVEENQESTPVFIQQETTGVPRSDKVPPPRDLQFVEVTDVKITIMWTPPESTVTGYRVDVIPVNLPGEHGQRLPINRNTFAEVTGLSPGVTYHFKVFAVNQGRESRPLTAEQTTKLDAPTNLRFANETDSTVLVIWTPPRARIAGYRLTVGPTRGGHPKQYNVGPSASQYPLRNLQPATEYTVSLVAVKGNQQSPKATGVFTTLQPLSSIPPYNTEVTETTIVITWTPAPRIGFKLGVRPSQGGEAPREVTSDSGSIVVSGLTPGVEYVYTISVLRDGQERDTPIVKKVVTPLSPPTNLHLEANPDTGVLTVSWERSTTPDITGYRITTTPTNGQQGYSLEEVVHADQSSCTFENLSPGLEYNVSVYTVKDDKESVPISDTIIPEVPQLTDLSFVDITDSSIGLRWTPLNSSTIIGYRITVVAAGEGIPIFEDFVDSSVGYYTVTGLEPGIDYDISVITLINGGESAPTTLTQQTAVPPPTDLRFTNIGPDTMRVTWAPPPSIELTNFLVRYSPVKNEEDVAELSISPSDNVVVLTNLLPGTEYLVSVSSVYEQHESTPLRGRQKTGLDSPSGIDFSDITANSFTVHWIAPRATITGYRIRHHPEHTSGRPREDRVPPSRNSITLTNLNPGTEYVVSIIALNGREESPPLIGQQSSLQPPTSLLISWDAPAVTVRYYRITYGENSPVQEFTVPGSKSTATISGLKPGADYTITVYAVTGRGDSPASSKPVSIDYRTGTDSSMQVTDVQDNSISVRWLPSSSPVTGYRVTTTPKNGPGPSKTKTAGPDQTEMTIEGLQPTVEYVVSVYAQNRNGESQPLVQTAVTTIPAPADLKFTQVTPTSLTAQWTAPNVQLTGYRVRVTPKEKTGPMKEINLAPDSSSVVVSGLMVATKYEVSVYALKDTLTSRPAQGVVTTLENVSPPRRARVTDATETTITISWRTKTETITGFQVDAIPANGQNPIQRTIRPDVRSYTITGLQPGTDYKIYLYTLNDNARSSPVVIDRLTFVFFQPLMHHPTCVFLATTPNSLLVSWQPPRARITGYIIKYEKPGSPPREVVPRPRPGVTEATITGLEPGTEYTIQVIALKNNQKSEPLIGRKKTGQEALSQTTISWTPFQESSEYIISCHPVGIDEEPLQFRVPGTSASATLTGLTRGATYNIIVEALKDQKRHKVREEVVTVGNSVDQGLNQPTDDSCFDPYTRLSESGFKLSCQCLGFGSGHFRCDSSKWCHDNGVNYKIGEKWDRQGENGQMMSCTCLGNGKGEFKCDPHEATCYDDGKTYHVGEQWQKEYLGAICSCTCFGGQRGWRCDNCRRPGAEPGHEGSTGHYNQYSQRYHQRTNTNVNCPIECFMPLDVQADREDSRE</sequence>
<keyword id="KW-0011">Acute phase</keyword>
<keyword id="KW-0025">Alternative splicing</keyword>
<keyword id="KW-0130">Cell adhesion</keyword>
<keyword id="KW-0133">Cell shape</keyword>
<keyword id="KW-1015">Disulfide bond</keyword>
<keyword id="KW-0238">DNA-binding</keyword>
<keyword id="KW-0272">Extracellular matrix</keyword>
<keyword id="KW-0325">Glycoprotein</keyword>
<keyword id="KW-0358">Heparin-binding</keyword>
<keyword id="KW-1017">Isopeptide bond</keyword>
<keyword id="KW-0558">Oxidation</keyword>
<keyword id="KW-0597">Phosphoprotein</keyword>
<keyword id="KW-0873">Pyrrolidone carboxylic acid</keyword>
<keyword id="KW-1185">Reference proteome</keyword>
<keyword id="KW-0677">Repeat</keyword>
<keyword id="KW-0964">Secreted</keyword>
<keyword id="KW-0765">Sulfation</keyword>
<reference key="1">
    <citation type="journal article" date="2005" name="Nature">
        <title>Genome sequence, comparative analysis and haplotype structure of the domestic dog.</title>
        <authorList>
            <person name="Lindblad-Toh K."/>
            <person name="Wade C.M."/>
            <person name="Mikkelsen T.S."/>
            <person name="Karlsson E.K."/>
            <person name="Jaffe D.B."/>
            <person name="Kamal M."/>
            <person name="Clamp M."/>
            <person name="Chang J.L."/>
            <person name="Kulbokas E.J. III"/>
            <person name="Zody M.C."/>
            <person name="Mauceli E."/>
            <person name="Xie X."/>
            <person name="Breen M."/>
            <person name="Wayne R.K."/>
            <person name="Ostrander E.A."/>
            <person name="Ponting C.P."/>
            <person name="Galibert F."/>
            <person name="Smith D.R."/>
            <person name="deJong P.J."/>
            <person name="Kirkness E.F."/>
            <person name="Alvarez P."/>
            <person name="Biagi T."/>
            <person name="Brockman W."/>
            <person name="Butler J."/>
            <person name="Chin C.-W."/>
            <person name="Cook A."/>
            <person name="Cuff J."/>
            <person name="Daly M.J."/>
            <person name="DeCaprio D."/>
            <person name="Gnerre S."/>
            <person name="Grabherr M."/>
            <person name="Kellis M."/>
            <person name="Kleber M."/>
            <person name="Bardeleben C."/>
            <person name="Goodstadt L."/>
            <person name="Heger A."/>
            <person name="Hitte C."/>
            <person name="Kim L."/>
            <person name="Koepfli K.-P."/>
            <person name="Parker H.G."/>
            <person name="Pollinger J.P."/>
            <person name="Searle S.M.J."/>
            <person name="Sutter N.B."/>
            <person name="Thomas R."/>
            <person name="Webber C."/>
            <person name="Baldwin J."/>
            <person name="Abebe A."/>
            <person name="Abouelleil A."/>
            <person name="Aftuck L."/>
            <person name="Ait-Zahra M."/>
            <person name="Aldredge T."/>
            <person name="Allen N."/>
            <person name="An P."/>
            <person name="Anderson S."/>
            <person name="Antoine C."/>
            <person name="Arachchi H."/>
            <person name="Aslam A."/>
            <person name="Ayotte L."/>
            <person name="Bachantsang P."/>
            <person name="Barry A."/>
            <person name="Bayul T."/>
            <person name="Benamara M."/>
            <person name="Berlin A."/>
            <person name="Bessette D."/>
            <person name="Blitshteyn B."/>
            <person name="Bloom T."/>
            <person name="Blye J."/>
            <person name="Boguslavskiy L."/>
            <person name="Bonnet C."/>
            <person name="Boukhgalter B."/>
            <person name="Brown A."/>
            <person name="Cahill P."/>
            <person name="Calixte N."/>
            <person name="Camarata J."/>
            <person name="Cheshatsang Y."/>
            <person name="Chu J."/>
            <person name="Citroen M."/>
            <person name="Collymore A."/>
            <person name="Cooke P."/>
            <person name="Dawoe T."/>
            <person name="Daza R."/>
            <person name="Decktor K."/>
            <person name="DeGray S."/>
            <person name="Dhargay N."/>
            <person name="Dooley K."/>
            <person name="Dooley K."/>
            <person name="Dorje P."/>
            <person name="Dorjee K."/>
            <person name="Dorris L."/>
            <person name="Duffey N."/>
            <person name="Dupes A."/>
            <person name="Egbiremolen O."/>
            <person name="Elong R."/>
            <person name="Falk J."/>
            <person name="Farina A."/>
            <person name="Faro S."/>
            <person name="Ferguson D."/>
            <person name="Ferreira P."/>
            <person name="Fisher S."/>
            <person name="FitzGerald M."/>
            <person name="Foley K."/>
            <person name="Foley C."/>
            <person name="Franke A."/>
            <person name="Friedrich D."/>
            <person name="Gage D."/>
            <person name="Garber M."/>
            <person name="Gearin G."/>
            <person name="Giannoukos G."/>
            <person name="Goode T."/>
            <person name="Goyette A."/>
            <person name="Graham J."/>
            <person name="Grandbois E."/>
            <person name="Gyaltsen K."/>
            <person name="Hafez N."/>
            <person name="Hagopian D."/>
            <person name="Hagos B."/>
            <person name="Hall J."/>
            <person name="Healy C."/>
            <person name="Hegarty R."/>
            <person name="Honan T."/>
            <person name="Horn A."/>
            <person name="Houde N."/>
            <person name="Hughes L."/>
            <person name="Hunnicutt L."/>
            <person name="Husby M."/>
            <person name="Jester B."/>
            <person name="Jones C."/>
            <person name="Kamat A."/>
            <person name="Kanga B."/>
            <person name="Kells C."/>
            <person name="Khazanovich D."/>
            <person name="Kieu A.C."/>
            <person name="Kisner P."/>
            <person name="Kumar M."/>
            <person name="Lance K."/>
            <person name="Landers T."/>
            <person name="Lara M."/>
            <person name="Lee W."/>
            <person name="Leger J.-P."/>
            <person name="Lennon N."/>
            <person name="Leuper L."/>
            <person name="LeVine S."/>
            <person name="Liu J."/>
            <person name="Liu X."/>
            <person name="Lokyitsang Y."/>
            <person name="Lokyitsang T."/>
            <person name="Lui A."/>
            <person name="Macdonald J."/>
            <person name="Major J."/>
            <person name="Marabella R."/>
            <person name="Maru K."/>
            <person name="Matthews C."/>
            <person name="McDonough S."/>
            <person name="Mehta T."/>
            <person name="Meldrim J."/>
            <person name="Melnikov A."/>
            <person name="Meneus L."/>
            <person name="Mihalev A."/>
            <person name="Mihova T."/>
            <person name="Miller K."/>
            <person name="Mittelman R."/>
            <person name="Mlenga V."/>
            <person name="Mulrain L."/>
            <person name="Munson G."/>
            <person name="Navidi A."/>
            <person name="Naylor J."/>
            <person name="Nguyen T."/>
            <person name="Nguyen N."/>
            <person name="Nguyen C."/>
            <person name="Nguyen T."/>
            <person name="Nicol R."/>
            <person name="Norbu N."/>
            <person name="Norbu C."/>
            <person name="Novod N."/>
            <person name="Nyima T."/>
            <person name="Olandt P."/>
            <person name="O'Neill B."/>
            <person name="O'Neill K."/>
            <person name="Osman S."/>
            <person name="Oyono L."/>
            <person name="Patti C."/>
            <person name="Perrin D."/>
            <person name="Phunkhang P."/>
            <person name="Pierre F."/>
            <person name="Priest M."/>
            <person name="Rachupka A."/>
            <person name="Raghuraman S."/>
            <person name="Rameau R."/>
            <person name="Ray V."/>
            <person name="Raymond C."/>
            <person name="Rege F."/>
            <person name="Rise C."/>
            <person name="Rogers J."/>
            <person name="Rogov P."/>
            <person name="Sahalie J."/>
            <person name="Settipalli S."/>
            <person name="Sharpe T."/>
            <person name="Shea T."/>
            <person name="Sheehan M."/>
            <person name="Sherpa N."/>
            <person name="Shi J."/>
            <person name="Shih D."/>
            <person name="Sloan J."/>
            <person name="Smith C."/>
            <person name="Sparrow T."/>
            <person name="Stalker J."/>
            <person name="Stange-Thomann N."/>
            <person name="Stavropoulos S."/>
            <person name="Stone C."/>
            <person name="Stone S."/>
            <person name="Sykes S."/>
            <person name="Tchuinga P."/>
            <person name="Tenzing P."/>
            <person name="Tesfaye S."/>
            <person name="Thoulutsang D."/>
            <person name="Thoulutsang Y."/>
            <person name="Topham K."/>
            <person name="Topping I."/>
            <person name="Tsamla T."/>
            <person name="Vassiliev H."/>
            <person name="Venkataraman V."/>
            <person name="Vo A."/>
            <person name="Wangchuk T."/>
            <person name="Wangdi T."/>
            <person name="Weiand M."/>
            <person name="Wilkinson J."/>
            <person name="Wilson A."/>
            <person name="Yadav S."/>
            <person name="Yang S."/>
            <person name="Yang X."/>
            <person name="Young G."/>
            <person name="Yu Q."/>
            <person name="Zainoun J."/>
            <person name="Zembek L."/>
            <person name="Zimmer A."/>
            <person name="Lander E.S."/>
        </authorList>
    </citation>
    <scope>NUCLEOTIDE SEQUENCE [LARGE SCALE GENOMIC DNA]</scope>
    <source>
        <strain>Boxer</strain>
    </source>
</reference>
<reference key="2">
    <citation type="journal article" date="1996" name="J. Biol. Chem.">
        <title>Fibronectin mRNA splice variant in articular cartilage lacks bases encoding the V, III-15, and I-10 protein segments.</title>
        <authorList>
            <person name="Macleod J.N."/>
            <person name="Burton-Wurster N."/>
            <person name="Gu D.N."/>
            <person name="Lust G."/>
        </authorList>
    </citation>
    <scope>NUCLEOTIDE SEQUENCE [MRNA] OF 1737-2131 (ISOFORM 2)</scope>
    <scope>FUNCTION</scope>
    <scope>NUCLEOTIDE SEQUENCE [MRNA] OF 1737-2132 (ISOFORM 1)</scope>
    <scope>TISSUE SPECIFICITY (ISOFORM 2)</scope>
    <source>
        <tissue>Cartilage</tissue>
    </source>
</reference>
<dbReference type="EMBL" id="AAEX00000000">
    <property type="status" value="NOT_ANNOTATED_CDS"/>
    <property type="molecule type" value="Genomic_DNA"/>
</dbReference>
<dbReference type="EMBL" id="U52105">
    <property type="protein sequence ID" value="AAC48611.1"/>
    <property type="molecule type" value="mRNA"/>
</dbReference>
<dbReference type="EMBL" id="U52106">
    <property type="protein sequence ID" value="AAC48612.1"/>
    <property type="molecule type" value="mRNA"/>
</dbReference>
<dbReference type="SMR" id="Q28275"/>
<dbReference type="CORUM" id="Q28275"/>
<dbReference type="FunCoup" id="Q28275">
    <property type="interactions" value="183"/>
</dbReference>
<dbReference type="STRING" id="9615.ENSCAFP00000066679"/>
<dbReference type="GlyCosmos" id="Q28275">
    <property type="glycosylation" value="7 sites, No reported glycans"/>
</dbReference>
<dbReference type="PaxDb" id="9612-ENSCAFP00000021176"/>
<dbReference type="Ensembl" id="ENSCAFT00030032444.1">
    <molecule id="Q28275-4"/>
    <property type="protein sequence ID" value="ENSCAFP00030028299.1"/>
    <property type="gene ID" value="ENSCAFG00030010199.1"/>
</dbReference>
<dbReference type="eggNOG" id="ENOG502QPTS">
    <property type="taxonomic scope" value="Eukaryota"/>
</dbReference>
<dbReference type="InParanoid" id="Q28275"/>
<dbReference type="OrthoDB" id="261433at2759"/>
<dbReference type="Proteomes" id="UP000002254">
    <property type="component" value="Unplaced"/>
</dbReference>
<dbReference type="Proteomes" id="UP000694429">
    <property type="component" value="Unassembled WGS sequence"/>
</dbReference>
<dbReference type="Proteomes" id="UP000694542">
    <property type="component" value="Unplaced"/>
</dbReference>
<dbReference type="Proteomes" id="UP000805418">
    <property type="component" value="Unplaced"/>
</dbReference>
<dbReference type="GO" id="GO:0005615">
    <property type="term" value="C:extracellular space"/>
    <property type="evidence" value="ECO:0007669"/>
    <property type="project" value="UniProtKB-ARBA"/>
</dbReference>
<dbReference type="GO" id="GO:0003677">
    <property type="term" value="F:DNA binding"/>
    <property type="evidence" value="ECO:0007669"/>
    <property type="project" value="UniProtKB-KW"/>
</dbReference>
<dbReference type="GO" id="GO:0008201">
    <property type="term" value="F:heparin binding"/>
    <property type="evidence" value="ECO:0007669"/>
    <property type="project" value="UniProtKB-KW"/>
</dbReference>
<dbReference type="GO" id="GO:0005178">
    <property type="term" value="F:integrin binding"/>
    <property type="evidence" value="ECO:0000318"/>
    <property type="project" value="GO_Central"/>
</dbReference>
<dbReference type="GO" id="GO:0043394">
    <property type="term" value="F:proteoglycan binding"/>
    <property type="evidence" value="ECO:0000318"/>
    <property type="project" value="GO_Central"/>
</dbReference>
<dbReference type="GO" id="GO:0006953">
    <property type="term" value="P:acute-phase response"/>
    <property type="evidence" value="ECO:0007669"/>
    <property type="project" value="UniProtKB-KW"/>
</dbReference>
<dbReference type="GO" id="GO:0007160">
    <property type="term" value="P:cell-matrix adhesion"/>
    <property type="evidence" value="ECO:0000318"/>
    <property type="project" value="GO_Central"/>
</dbReference>
<dbReference type="GO" id="GO:0007044">
    <property type="term" value="P:cell-substrate junction assembly"/>
    <property type="evidence" value="ECO:0000318"/>
    <property type="project" value="GO_Central"/>
</dbReference>
<dbReference type="GO" id="GO:0007507">
    <property type="term" value="P:heart development"/>
    <property type="evidence" value="ECO:0000318"/>
    <property type="project" value="GO_Central"/>
</dbReference>
<dbReference type="GO" id="GO:0007399">
    <property type="term" value="P:nervous system development"/>
    <property type="evidence" value="ECO:0000318"/>
    <property type="project" value="GO_Central"/>
</dbReference>
<dbReference type="GO" id="GO:0008360">
    <property type="term" value="P:regulation of cell shape"/>
    <property type="evidence" value="ECO:0007669"/>
    <property type="project" value="UniProtKB-KW"/>
</dbReference>
<dbReference type="CDD" id="cd00061">
    <property type="entry name" value="FN1"/>
    <property type="match status" value="10"/>
</dbReference>
<dbReference type="CDD" id="cd00062">
    <property type="entry name" value="FN2"/>
    <property type="match status" value="2"/>
</dbReference>
<dbReference type="CDD" id="cd00063">
    <property type="entry name" value="FN3"/>
    <property type="match status" value="15"/>
</dbReference>
<dbReference type="FunFam" id="2.10.70.10:FF:000004">
    <property type="entry name" value="Fibronectin 1"/>
    <property type="match status" value="1"/>
</dbReference>
<dbReference type="FunFam" id="2.10.70.10:FF:000006">
    <property type="entry name" value="Fibronectin 1"/>
    <property type="match status" value="2"/>
</dbReference>
<dbReference type="FunFam" id="2.10.70.10:FF:000007">
    <property type="entry name" value="Fibronectin 1"/>
    <property type="match status" value="2"/>
</dbReference>
<dbReference type="FunFam" id="2.10.70.10:FF:000018">
    <property type="entry name" value="Fibronectin 1"/>
    <property type="match status" value="1"/>
</dbReference>
<dbReference type="FunFam" id="2.60.40.10:FF:000099">
    <property type="entry name" value="Fibronectin 1"/>
    <property type="match status" value="3"/>
</dbReference>
<dbReference type="FunFam" id="2.60.40.10:FF:000417">
    <property type="entry name" value="Fibronectin 1"/>
    <property type="match status" value="1"/>
</dbReference>
<dbReference type="FunFam" id="2.60.40.10:FF:000579">
    <property type="entry name" value="Fibronectin 1"/>
    <property type="match status" value="1"/>
</dbReference>
<dbReference type="FunFam" id="2.60.40.10:FF:000622">
    <property type="entry name" value="Fibronectin 1"/>
    <property type="match status" value="1"/>
</dbReference>
<dbReference type="FunFam" id="2.60.40.10:FF:001069">
    <property type="entry name" value="Fibronectin 1"/>
    <property type="match status" value="1"/>
</dbReference>
<dbReference type="FunFam" id="2.10.10.10:FF:000001">
    <property type="entry name" value="Fibronectin 1a isoform 1"/>
    <property type="match status" value="2"/>
</dbReference>
<dbReference type="FunFam" id="2.10.70.10:FF:000017">
    <property type="entry name" value="Fibronectin isoform X1"/>
    <property type="match status" value="1"/>
</dbReference>
<dbReference type="FunFam" id="2.60.40.10:FF:000227">
    <property type="entry name" value="Fibronectin isoform X1"/>
    <property type="match status" value="1"/>
</dbReference>
<dbReference type="FunFam" id="2.10.70.10:FF:000020">
    <property type="entry name" value="fibronectin isoform X1"/>
    <property type="match status" value="1"/>
</dbReference>
<dbReference type="FunFam" id="2.10.70.10:FF:000021">
    <property type="entry name" value="fibronectin isoform X1"/>
    <property type="match status" value="1"/>
</dbReference>
<dbReference type="FunFam" id="2.10.70.10:FF:000022">
    <property type="entry name" value="fibronectin isoform X1"/>
    <property type="match status" value="1"/>
</dbReference>
<dbReference type="FunFam" id="2.60.40.10:FF:000275">
    <property type="entry name" value="fibronectin isoform X1"/>
    <property type="match status" value="1"/>
</dbReference>
<dbReference type="FunFam" id="2.60.40.10:FF:000300">
    <property type="entry name" value="fibronectin isoform X1"/>
    <property type="match status" value="1"/>
</dbReference>
<dbReference type="FunFam" id="2.60.40.10:FF:000306">
    <property type="entry name" value="fibronectin isoform X1"/>
    <property type="match status" value="1"/>
</dbReference>
<dbReference type="FunFam" id="2.60.40.10:FF:000336">
    <property type="entry name" value="fibronectin isoform X1"/>
    <property type="match status" value="1"/>
</dbReference>
<dbReference type="FunFam" id="2.60.40.10:FF:000382">
    <property type="entry name" value="fibronectin isoform X1"/>
    <property type="match status" value="1"/>
</dbReference>
<dbReference type="FunFam" id="2.60.40.10:FF:000447">
    <property type="entry name" value="fibronectin isoform X1"/>
    <property type="match status" value="1"/>
</dbReference>
<dbReference type="FunFam" id="2.60.40.10:FF:000433">
    <property type="entry name" value="fibronectin isoform X5"/>
    <property type="match status" value="1"/>
</dbReference>
<dbReference type="Gene3D" id="2.10.70.10">
    <property type="entry name" value="Complement Module, domain 1"/>
    <property type="match status" value="12"/>
</dbReference>
<dbReference type="Gene3D" id="2.10.10.10">
    <property type="entry name" value="Fibronectin, type II, collagen-binding"/>
    <property type="match status" value="2"/>
</dbReference>
<dbReference type="Gene3D" id="2.60.40.10">
    <property type="entry name" value="Immunoglobulins"/>
    <property type="match status" value="16"/>
</dbReference>
<dbReference type="InterPro" id="IPR050991">
    <property type="entry name" value="ECM_Regulatory_Proteins"/>
</dbReference>
<dbReference type="InterPro" id="IPR000083">
    <property type="entry name" value="Fibronectin_type1"/>
</dbReference>
<dbReference type="InterPro" id="IPR003961">
    <property type="entry name" value="FN3_dom"/>
</dbReference>
<dbReference type="InterPro" id="IPR036116">
    <property type="entry name" value="FN3_sf"/>
</dbReference>
<dbReference type="InterPro" id="IPR000562">
    <property type="entry name" value="FN_type2_dom"/>
</dbReference>
<dbReference type="InterPro" id="IPR036943">
    <property type="entry name" value="FN_type2_sf"/>
</dbReference>
<dbReference type="InterPro" id="IPR013783">
    <property type="entry name" value="Ig-like_fold"/>
</dbReference>
<dbReference type="InterPro" id="IPR013806">
    <property type="entry name" value="Kringle-like"/>
</dbReference>
<dbReference type="PANTHER" id="PTHR46708:SF8">
    <property type="entry name" value="FIBRONECTIN"/>
    <property type="match status" value="1"/>
</dbReference>
<dbReference type="PANTHER" id="PTHR46708">
    <property type="entry name" value="TENASCIN"/>
    <property type="match status" value="1"/>
</dbReference>
<dbReference type="Pfam" id="PF00039">
    <property type="entry name" value="fn1"/>
    <property type="match status" value="9"/>
</dbReference>
<dbReference type="Pfam" id="PF00040">
    <property type="entry name" value="fn2"/>
    <property type="match status" value="2"/>
</dbReference>
<dbReference type="Pfam" id="PF00041">
    <property type="entry name" value="fn3"/>
    <property type="match status" value="15"/>
</dbReference>
<dbReference type="PRINTS" id="PR00013">
    <property type="entry name" value="FNTYPEII"/>
</dbReference>
<dbReference type="SMART" id="SM00058">
    <property type="entry name" value="FN1"/>
    <property type="match status" value="12"/>
</dbReference>
<dbReference type="SMART" id="SM00059">
    <property type="entry name" value="FN2"/>
    <property type="match status" value="2"/>
</dbReference>
<dbReference type="SMART" id="SM00060">
    <property type="entry name" value="FN3"/>
    <property type="match status" value="16"/>
</dbReference>
<dbReference type="SUPFAM" id="SSF49265">
    <property type="entry name" value="Fibronectin type III"/>
    <property type="match status" value="10"/>
</dbReference>
<dbReference type="SUPFAM" id="SSF57603">
    <property type="entry name" value="FnI-like domain"/>
    <property type="match status" value="12"/>
</dbReference>
<dbReference type="SUPFAM" id="SSF57440">
    <property type="entry name" value="Kringle-like"/>
    <property type="match status" value="2"/>
</dbReference>
<dbReference type="PROSITE" id="PS00022">
    <property type="entry name" value="EGF_1"/>
    <property type="match status" value="2"/>
</dbReference>
<dbReference type="PROSITE" id="PS01253">
    <property type="entry name" value="FN1_1"/>
    <property type="match status" value="10"/>
</dbReference>
<dbReference type="PROSITE" id="PS51091">
    <property type="entry name" value="FN1_2"/>
    <property type="match status" value="12"/>
</dbReference>
<dbReference type="PROSITE" id="PS00023">
    <property type="entry name" value="FN2_1"/>
    <property type="match status" value="2"/>
</dbReference>
<dbReference type="PROSITE" id="PS51092">
    <property type="entry name" value="FN2_2"/>
    <property type="match status" value="2"/>
</dbReference>
<dbReference type="PROSITE" id="PS50853">
    <property type="entry name" value="FN3"/>
    <property type="match status" value="15"/>
</dbReference>
<protein>
    <recommendedName>
        <fullName evidence="2">Fibronectin</fullName>
        <shortName>FN</shortName>
    </recommendedName>
</protein>
<feature type="chain" id="PRO_0000158528" description="Fibronectin">
    <location>
        <begin position="1" status="less than"/>
        <end position="2208"/>
    </location>
</feature>
<feature type="domain" description="Fibronectin type-I 1" evidence="7">
    <location>
        <begin position="27"/>
        <end position="67"/>
    </location>
</feature>
<feature type="domain" description="Fibronectin type-I 2" evidence="7">
    <location>
        <begin position="72"/>
        <end position="115"/>
    </location>
</feature>
<feature type="domain" description="Fibronectin type-I 3" evidence="7">
    <location>
        <begin position="116"/>
        <end position="159"/>
    </location>
</feature>
<feature type="domain" description="Fibronectin type-I 4" evidence="7">
    <location>
        <begin position="161"/>
        <end position="205"/>
    </location>
</feature>
<feature type="domain" description="Fibronectin type-I 5" evidence="7">
    <location>
        <begin position="206"/>
        <end position="250"/>
    </location>
</feature>
<feature type="domain" description="Fibronectin type-I 6" evidence="7">
    <location>
        <begin position="283"/>
        <end position="322"/>
    </location>
</feature>
<feature type="domain" description="Fibronectin type-II 1" evidence="8">
    <location>
        <begin position="332"/>
        <end position="380"/>
    </location>
</feature>
<feature type="domain" description="Fibronectin type-II 2" evidence="8">
    <location>
        <begin position="392"/>
        <end position="440"/>
    </location>
</feature>
<feature type="domain" description="Fibronectin type-I 7" evidence="7">
    <location>
        <begin position="421"/>
        <end position="475"/>
    </location>
</feature>
<feature type="domain" description="Fibronectin type-I 8" evidence="7">
    <location>
        <begin position="480"/>
        <end position="522"/>
    </location>
</feature>
<feature type="domain" description="Fibronectin type-I 9" evidence="7">
    <location>
        <begin position="523"/>
        <end position="566"/>
    </location>
</feature>
<feature type="domain" description="Fibronectin type-III 1" evidence="6">
    <location>
        <begin position="574"/>
        <end position="669"/>
    </location>
</feature>
<feature type="domain" description="Fibronectin type-III 2" evidence="6">
    <location>
        <begin position="681"/>
        <end position="776"/>
    </location>
</feature>
<feature type="domain" description="Fibronectin type-III 3" evidence="6">
    <location>
        <begin position="777"/>
        <end position="866"/>
    </location>
</feature>
<feature type="domain" description="Fibronectin type-III 4" evidence="6">
    <location>
        <begin position="873"/>
        <end position="964"/>
    </location>
</feature>
<feature type="domain" description="Fibronectin type-III 5" evidence="6">
    <location>
        <begin position="965"/>
        <end position="1052"/>
    </location>
</feature>
<feature type="domain" description="Fibronectin type-III 6" evidence="6">
    <location>
        <begin position="1053"/>
        <end position="1139"/>
    </location>
</feature>
<feature type="domain" description="Fibronectin type-III 7" evidence="6">
    <location>
        <begin position="1140"/>
        <end position="1234"/>
    </location>
</feature>
<feature type="domain" description="Fibronectin type-III 8; extra domain B" evidence="6">
    <location>
        <begin position="1235"/>
        <end position="1323"/>
    </location>
</feature>
<feature type="domain" description="Fibronectin type-III 9" evidence="6">
    <location>
        <begin position="1324"/>
        <end position="1414"/>
    </location>
</feature>
<feature type="domain" description="Fibronectin type-III 10" evidence="6">
    <location>
        <begin position="1415"/>
        <end position="1505"/>
    </location>
</feature>
<feature type="domain" description="Fibronectin type-III 11" evidence="6">
    <location>
        <begin position="1506"/>
        <end position="1581"/>
    </location>
</feature>
<feature type="domain" description="Fibronectin type-III 12" evidence="6">
    <location>
        <begin position="1583"/>
        <end position="1673"/>
    </location>
</feature>
<feature type="domain" description="Fibronectin type-III 13; extra domain A" evidence="6">
    <location>
        <begin position="1674"/>
        <end position="1766"/>
    </location>
</feature>
<feature type="domain" description="Fibronectin type-III 14" evidence="6">
    <location>
        <begin position="1767"/>
        <end position="1856"/>
    </location>
</feature>
<feature type="domain" description="Fibronectin type-III 15" evidence="6">
    <location>
        <begin position="1857"/>
        <end position="1949"/>
    </location>
</feature>
<feature type="domain" description="Fibronectin type-I 10" evidence="7">
    <location>
        <begin position="2025"/>
        <end position="2071"/>
    </location>
</feature>
<feature type="domain" description="Fibronectin type-I 11" evidence="7">
    <location>
        <begin position="2072"/>
        <end position="2114"/>
    </location>
</feature>
<feature type="domain" description="Fibronectin type-I 12" evidence="7">
    <location>
        <begin position="2116"/>
        <end position="2156"/>
    </location>
</feature>
<feature type="DNA-binding region" evidence="2">
    <location>
        <begin position="871"/>
        <end position="1136"/>
    </location>
</feature>
<feature type="region of interest" description="Disordered" evidence="10">
    <location>
        <begin position="1"/>
        <end position="26"/>
    </location>
</feature>
<feature type="region of interest" description="Fibrin- and heparin-binding 1" evidence="2">
    <location>
        <begin position="29"/>
        <end position="249"/>
    </location>
</feature>
<feature type="region of interest" description="Collagen-binding" evidence="2">
    <location>
        <begin position="285"/>
        <end position="572"/>
    </location>
</feature>
<feature type="region of interest" description="Disordered" evidence="10">
    <location>
        <begin position="662"/>
        <end position="681"/>
    </location>
</feature>
<feature type="region of interest" description="Cell-attachment" evidence="2">
    <location>
        <begin position="1322"/>
        <end position="1581"/>
    </location>
</feature>
<feature type="region of interest" description="Disordered" evidence="10">
    <location>
        <begin position="1447"/>
        <end position="1471"/>
    </location>
</feature>
<feature type="region of interest" description="Disordered" evidence="10">
    <location>
        <begin position="1608"/>
        <end position="1633"/>
    </location>
</feature>
<feature type="region of interest" description="Fibrin-binding 2" evidence="2">
    <location>
        <begin position="2040"/>
        <end position="2160"/>
    </location>
</feature>
<feature type="short sequence motif" description="Cell attachment site" evidence="2">
    <location>
        <begin position="1565"/>
        <end position="1567"/>
    </location>
</feature>
<feature type="compositionally biased region" description="Low complexity" evidence="10">
    <location>
        <begin position="1"/>
        <end position="19"/>
    </location>
</feature>
<feature type="compositionally biased region" description="Low complexity" evidence="10">
    <location>
        <begin position="662"/>
        <end position="676"/>
    </location>
</feature>
<feature type="compositionally biased region" description="Basic and acidic residues" evidence="10">
    <location>
        <begin position="1450"/>
        <end position="1462"/>
    </location>
</feature>
<feature type="compositionally biased region" description="Polar residues" evidence="10">
    <location>
        <begin position="1608"/>
        <end position="1618"/>
    </location>
</feature>
<feature type="site" description="Important for superfibronectin formation" evidence="2">
    <location>
        <position position="627"/>
    </location>
</feature>
<feature type="site" description="Important for superfibronectin formation" evidence="2">
    <location>
        <position position="630"/>
    </location>
</feature>
<feature type="modified residue" description="Sulfotyrosine" evidence="5">
    <location>
        <position position="840"/>
    </location>
</feature>
<feature type="modified residue" description="Sulfotyrosine" evidence="5">
    <location>
        <position position="845"/>
    </location>
</feature>
<feature type="modified residue" description="Phosphothreonine" evidence="2">
    <location>
        <position position="2185"/>
    </location>
</feature>
<feature type="modified residue" description="Phosphoserine" evidence="2">
    <location>
        <position position="2206"/>
    </location>
</feature>
<feature type="glycosylation site" description="N-linked (GlcNAc...) asparagine" evidence="9">
    <location>
        <position position="407"/>
    </location>
</feature>
<feature type="glycosylation site" description="N-linked (GlcNAc...) asparagine" evidence="9">
    <location>
        <position position="492"/>
    </location>
</feature>
<feature type="glycosylation site" description="N-linked (GlcNAc...) asparagine" evidence="9">
    <location>
        <position position="506"/>
    </location>
</feature>
<feature type="glycosylation site" description="N-linked (GlcNAc...) asparagine" evidence="9">
    <location>
        <position position="841"/>
    </location>
</feature>
<feature type="glycosylation site" description="N-linked (GlcNAc...) asparagine" evidence="9">
    <location>
        <position position="971"/>
    </location>
</feature>
<feature type="glycosylation site" description="N-linked (GlcNAc...) asparagine" evidence="9">
    <location>
        <position position="1208"/>
    </location>
</feature>
<feature type="glycosylation site" description="N-linked (GlcNAc...) asparagine" evidence="9">
    <location>
        <position position="1255"/>
    </location>
</feature>
<feature type="disulfide bond" evidence="7">
    <location>
        <begin position="29"/>
        <end position="55"/>
    </location>
</feature>
<feature type="disulfide bond" evidence="7">
    <location>
        <begin position="53"/>
        <end position="64"/>
    </location>
</feature>
<feature type="disulfide bond" evidence="7">
    <location>
        <begin position="74"/>
        <end position="102"/>
    </location>
</feature>
<feature type="disulfide bond" evidence="7">
    <location>
        <begin position="100"/>
        <end position="112"/>
    </location>
</feature>
<feature type="disulfide bond" evidence="7">
    <location>
        <begin position="118"/>
        <end position="146"/>
    </location>
</feature>
<feature type="disulfide bond" evidence="7">
    <location>
        <begin position="144"/>
        <end position="156"/>
    </location>
</feature>
<feature type="disulfide bond" evidence="7">
    <location>
        <begin position="163"/>
        <end position="192"/>
    </location>
</feature>
<feature type="disulfide bond" evidence="7">
    <location>
        <begin position="190"/>
        <end position="202"/>
    </location>
</feature>
<feature type="disulfide bond" evidence="7">
    <location>
        <begin position="208"/>
        <end position="237"/>
    </location>
</feature>
<feature type="disulfide bond" evidence="7">
    <location>
        <begin position="235"/>
        <end position="247"/>
    </location>
</feature>
<feature type="disulfide bond" evidence="7">
    <location>
        <begin position="285"/>
        <end position="312"/>
    </location>
</feature>
<feature type="disulfide bond" evidence="7">
    <location>
        <begin position="310"/>
        <end position="319"/>
    </location>
</feature>
<feature type="disulfide bond" evidence="8">
    <location>
        <begin position="337"/>
        <end position="363"/>
    </location>
</feature>
<feature type="disulfide bond" evidence="8">
    <location>
        <begin position="351"/>
        <end position="378"/>
    </location>
</feature>
<feature type="disulfide bond" evidence="8">
    <location>
        <begin position="397"/>
        <end position="423"/>
    </location>
</feature>
<feature type="disulfide bond" evidence="8">
    <location>
        <begin position="411"/>
        <end position="438"/>
    </location>
</feature>
<feature type="disulfide bond" evidence="7">
    <location>
        <begin position="423"/>
        <end position="462"/>
    </location>
</feature>
<feature type="disulfide bond" evidence="7">
    <location>
        <begin position="446"/>
        <end position="462"/>
    </location>
</feature>
<feature type="disulfide bond" evidence="7">
    <location>
        <begin position="460"/>
        <end position="472"/>
    </location>
</feature>
<feature type="disulfide bond" evidence="7">
    <location>
        <begin position="482"/>
        <end position="509"/>
    </location>
</feature>
<feature type="disulfide bond" evidence="7">
    <location>
        <begin position="507"/>
        <end position="519"/>
    </location>
</feature>
<feature type="disulfide bond" evidence="7">
    <location>
        <begin position="525"/>
        <end position="553"/>
    </location>
</feature>
<feature type="disulfide bond" evidence="7">
    <location>
        <begin position="551"/>
        <end position="563"/>
    </location>
</feature>
<feature type="disulfide bond" evidence="7">
    <location>
        <begin position="2040"/>
        <end position="2058"/>
    </location>
</feature>
<feature type="disulfide bond" evidence="7">
    <location>
        <begin position="2056"/>
        <end position="2068"/>
    </location>
</feature>
<feature type="disulfide bond" evidence="7">
    <location>
        <begin position="2074"/>
        <end position="2101"/>
    </location>
</feature>
<feature type="disulfide bond" evidence="7">
    <location>
        <begin position="2099"/>
        <end position="2111"/>
    </location>
</feature>
<feature type="disulfide bond" evidence="7">
    <location>
        <begin position="2118"/>
        <end position="2144"/>
    </location>
</feature>
<feature type="disulfide bond" evidence="7">
    <location>
        <begin position="2118"/>
        <end position="2142"/>
    </location>
</feature>
<feature type="disulfide bond" evidence="7">
    <location>
        <begin position="2140"/>
        <end position="2156"/>
    </location>
</feature>
<feature type="disulfide bond" evidence="7">
    <location>
        <begin position="2142"/>
        <end position="2153"/>
    </location>
</feature>
<feature type="cross-link" description="Isoglutamyl lysine isopeptide (Gln-Lys) (interchain with K-?)" evidence="4">
    <location>
        <position position="18"/>
    </location>
</feature>
<feature type="cross-link" description="Isoglutamyl lysine isopeptide (Gln-Lys) (interchain with K-?)" evidence="4">
    <location>
        <position position="19"/>
    </location>
</feature>
<feature type="splice variant" id="VSP_060854" description="In isoform 2 and isoform 1.">
    <original>RLTFVFFQPLMHHPTCV</original>
    <variation>ASTAIDAPSNLR</variation>
    <location>
        <begin position="1848"/>
        <end position="1864"/>
    </location>
</feature>
<feature type="splice variant" id="VSP_060855" description="In isoform 1.">
    <original>K</original>
    <variation>KTDELPQLVTLPHPNLHGPEILDVPSTVQKTPFITNPGYDTGNGIQLPGTSGQQPSVGQQMIFEEHGFRRTTPPTTATPVRHRPRPYPPNVNEEIQVGHVPRGDVDHHLYPHVMGLNPNAS</variation>
    <location>
        <position position="1944"/>
    </location>
</feature>
<feature type="splice variant" id="VSP_060856" description="In isoform 2.">
    <original>TGQEALSQTTISWTPFQESSEYIISCHPVGIDEEPLQFRVPGTSASATLTGLTRGATYNIIVEALKDQKRHKVREEVVTVGNSVDQGLNQPTDDSCFDPYTRLSESGFKLSCQCLGFGSGHFRCDSSK</original>
    <variation>TE</variation>
    <location>
        <begin position="1945"/>
        <end position="2072"/>
    </location>
</feature>
<feature type="splice variant" id="VSP_060857" description="In isoform 1.">
    <original>T</original>
    <variation>TVSHYAIGEEWE</variation>
    <location>
        <position position="2045"/>
    </location>
</feature>
<feature type="sequence conflict" description="In Ref. 2; AAC48612." evidence="12" ref="2">
    <original>Q</original>
    <variation>H</variation>
    <location>
        <position position="2130"/>
    </location>
</feature>
<feature type="non-terminal residue">
    <location>
        <position position="1"/>
    </location>
</feature>
<comment type="function">
    <text evidence="2 4">Fibronectins bind cell surfaces and various compounds including collagen, fibrin, heparin, DNA, and actin. Fibronectins are involved in cell adhesion, cell motility, opsonization, wound healing, and maintenance of cell shape (By similarity). Involved in osteoblast compaction through the fibronectin fibrillogenesis cell-mediated matrix assembly process, essential for osteoblast mineralization. Participates in the regulation of type I collagen deposition by osteoblasts (By similarity).</text>
</comment>
<comment type="function">
    <molecule>Isoform 2</molecule>
    <text evidence="11">Probably involved in matrix organization of cartilage.</text>
</comment>
<comment type="function">
    <text evidence="4">Secreted by contracting muscle, induces liver autophagy, a degradative pathway for nutrient mobilization and damage removal, and systemic insulin sensitization via hepatic ITGA5:ITGB1 integrin receptor signaling.</text>
</comment>
<comment type="subunit">
    <text evidence="1 2 4">Mostly heterodimers or multimers of alternatively spliced variants, connected by 2 disulfide bonds near the carboxyl ends; to a lesser extent homodimers. Interacts with FBLN1, AMBP, TNR, LGALS3BP and COL13A1. Interacts with FBLN7 (By similarity). Interacts with COMP. Interacts (via type III repeats 9-14) with TNFAIP6 (via CUB domain); this interaction enhances fibronectin fibril assembly. TNFAIP6 may act as a bridging molecule between FN1 and THBS1 (By similarity). Interacts with TNR; the interaction inhibits cell adhesion and neurite outgrowth (By similarity). Interacts with FST3 and MYOC (By similarity). Interacts with SVEP1 (By similarity).</text>
</comment>
<comment type="subcellular location">
    <subcellularLocation>
        <location evidence="4">Secreted</location>
        <location evidence="4">Extracellular space</location>
        <location evidence="4">Extracellular matrix</location>
    </subcellularLocation>
    <subcellularLocation>
        <location evidence="4">Secreted</location>
    </subcellularLocation>
</comment>
<comment type="alternative products">
    <event type="alternative splicing"/>
    <isoform>
        <id>Q28275-4</id>
        <name>3</name>
        <sequence type="displayed"/>
    </isoform>
    <isoform>
        <id>Q28275-1</id>
        <name>1</name>
        <sequence type="described" ref="VSP_060854 VSP_060855 VSP_060857"/>
    </isoform>
    <isoform>
        <id>Q28275-3</id>
        <name>2</name>
        <name>(V+C)-</name>
        <sequence type="described" ref="VSP_060854 VSP_060856"/>
    </isoform>
    <text evidence="12">A number of isoforms are produced. The diversity of isoforms depends on the V region and either of the two extra domains which can be either included or excluded (partially or completely for the V region).</text>
</comment>
<comment type="tissue specificity">
    <molecule>Isoform 2</molecule>
    <text evidence="11">Major transcript in articular cartilage, but it is absent from liver.</text>
</comment>
<comment type="PTM">
    <text evidence="2">Sulfated.</text>
</comment>
<comment type="PTM">
    <text evidence="4">Forms covalent cross-links mediated by a transglutaminase, such as F13A or TGM2, between a glutamine and the epsilon-amino group of a lysine residue, forming homopolymers and heteropolymers (e.g. fibrinogen-fibronectin, collagen-fibronectin heteropolymers).</text>
</comment>
<comment type="PTM">
    <text evidence="4">Some lysine residues are oxidized to allysine by LOXL3, promoting fibronectin activation and matrix formation.</text>
</comment>
<comment type="PTM">
    <text evidence="3">Serotonylated on Gln residues by TGM2 in response to hypoxia.</text>
</comment>
<comment type="miscellaneous">
    <molecule>Isoform 2</molecule>
    <text evidence="12">Lacks repeat 15 of fibronectin type-III, repeat 10 of fibronectin type-I, and the connecting strand 3.</text>
</comment>